<proteinExistence type="inferred from homology"/>
<gene>
    <name evidence="1" type="primary">recR</name>
    <name type="ordered locus">Noc_2595</name>
</gene>
<organism>
    <name type="scientific">Nitrosococcus oceani (strain ATCC 19707 / BCRC 17464 / JCM 30415 / NCIMB 11848 / C-107)</name>
    <dbReference type="NCBI Taxonomy" id="323261"/>
    <lineage>
        <taxon>Bacteria</taxon>
        <taxon>Pseudomonadati</taxon>
        <taxon>Pseudomonadota</taxon>
        <taxon>Gammaproteobacteria</taxon>
        <taxon>Chromatiales</taxon>
        <taxon>Chromatiaceae</taxon>
        <taxon>Nitrosococcus</taxon>
    </lineage>
</organism>
<feature type="chain" id="PRO_0000322922" description="Recombination protein RecR">
    <location>
        <begin position="1"/>
        <end position="199"/>
    </location>
</feature>
<feature type="domain" description="Toprim" evidence="1">
    <location>
        <begin position="81"/>
        <end position="176"/>
    </location>
</feature>
<feature type="zinc finger region" description="C4-type" evidence="1">
    <location>
        <begin position="58"/>
        <end position="73"/>
    </location>
</feature>
<name>RECR_NITOC</name>
<dbReference type="EMBL" id="CP000127">
    <property type="protein sequence ID" value="ABA59048.1"/>
    <property type="molecule type" value="Genomic_DNA"/>
</dbReference>
<dbReference type="RefSeq" id="WP_004269128.1">
    <property type="nucleotide sequence ID" value="NC_007484.1"/>
</dbReference>
<dbReference type="SMR" id="Q3J7Z8"/>
<dbReference type="FunCoup" id="Q3J7Z8">
    <property type="interactions" value="242"/>
</dbReference>
<dbReference type="STRING" id="323261.Noc_2595"/>
<dbReference type="KEGG" id="noc:Noc_2595"/>
<dbReference type="eggNOG" id="COG0353">
    <property type="taxonomic scope" value="Bacteria"/>
</dbReference>
<dbReference type="HOGENOM" id="CLU_060739_1_2_6"/>
<dbReference type="InParanoid" id="Q3J7Z8"/>
<dbReference type="Proteomes" id="UP000006838">
    <property type="component" value="Chromosome"/>
</dbReference>
<dbReference type="GO" id="GO:0003677">
    <property type="term" value="F:DNA binding"/>
    <property type="evidence" value="ECO:0007669"/>
    <property type="project" value="UniProtKB-UniRule"/>
</dbReference>
<dbReference type="GO" id="GO:0008270">
    <property type="term" value="F:zinc ion binding"/>
    <property type="evidence" value="ECO:0007669"/>
    <property type="project" value="UniProtKB-KW"/>
</dbReference>
<dbReference type="GO" id="GO:0006310">
    <property type="term" value="P:DNA recombination"/>
    <property type="evidence" value="ECO:0007669"/>
    <property type="project" value="UniProtKB-UniRule"/>
</dbReference>
<dbReference type="GO" id="GO:0006281">
    <property type="term" value="P:DNA repair"/>
    <property type="evidence" value="ECO:0007669"/>
    <property type="project" value="UniProtKB-UniRule"/>
</dbReference>
<dbReference type="CDD" id="cd01025">
    <property type="entry name" value="TOPRIM_recR"/>
    <property type="match status" value="1"/>
</dbReference>
<dbReference type="FunFam" id="3.40.1360.10:FF:000001">
    <property type="entry name" value="Recombination protein RecR"/>
    <property type="match status" value="1"/>
</dbReference>
<dbReference type="Gene3D" id="3.40.1360.10">
    <property type="match status" value="1"/>
</dbReference>
<dbReference type="Gene3D" id="6.10.250.240">
    <property type="match status" value="1"/>
</dbReference>
<dbReference type="Gene3D" id="1.10.8.420">
    <property type="entry name" value="RecR Domain 1"/>
    <property type="match status" value="1"/>
</dbReference>
<dbReference type="HAMAP" id="MF_00017">
    <property type="entry name" value="RecR"/>
    <property type="match status" value="1"/>
</dbReference>
<dbReference type="InterPro" id="IPR000093">
    <property type="entry name" value="DNA_Rcmb_RecR"/>
</dbReference>
<dbReference type="InterPro" id="IPR023627">
    <property type="entry name" value="Rcmb_RecR"/>
</dbReference>
<dbReference type="InterPro" id="IPR015967">
    <property type="entry name" value="Rcmb_RecR_Znf"/>
</dbReference>
<dbReference type="InterPro" id="IPR006171">
    <property type="entry name" value="TOPRIM_dom"/>
</dbReference>
<dbReference type="InterPro" id="IPR034137">
    <property type="entry name" value="TOPRIM_RecR"/>
</dbReference>
<dbReference type="NCBIfam" id="TIGR00615">
    <property type="entry name" value="recR"/>
    <property type="match status" value="1"/>
</dbReference>
<dbReference type="PANTHER" id="PTHR30446">
    <property type="entry name" value="RECOMBINATION PROTEIN RECR"/>
    <property type="match status" value="1"/>
</dbReference>
<dbReference type="PANTHER" id="PTHR30446:SF0">
    <property type="entry name" value="RECOMBINATION PROTEIN RECR"/>
    <property type="match status" value="1"/>
</dbReference>
<dbReference type="Pfam" id="PF21175">
    <property type="entry name" value="RecR_C"/>
    <property type="match status" value="1"/>
</dbReference>
<dbReference type="Pfam" id="PF21176">
    <property type="entry name" value="RecR_HhH"/>
    <property type="match status" value="1"/>
</dbReference>
<dbReference type="Pfam" id="PF02132">
    <property type="entry name" value="RecR_ZnF"/>
    <property type="match status" value="1"/>
</dbReference>
<dbReference type="Pfam" id="PF13662">
    <property type="entry name" value="Toprim_4"/>
    <property type="match status" value="1"/>
</dbReference>
<dbReference type="SMART" id="SM00493">
    <property type="entry name" value="TOPRIM"/>
    <property type="match status" value="1"/>
</dbReference>
<dbReference type="SUPFAM" id="SSF111304">
    <property type="entry name" value="Recombination protein RecR"/>
    <property type="match status" value="1"/>
</dbReference>
<dbReference type="PROSITE" id="PS01300">
    <property type="entry name" value="RECR"/>
    <property type="match status" value="1"/>
</dbReference>
<dbReference type="PROSITE" id="PS50880">
    <property type="entry name" value="TOPRIM"/>
    <property type="match status" value="1"/>
</dbReference>
<keyword id="KW-0227">DNA damage</keyword>
<keyword id="KW-0233">DNA recombination</keyword>
<keyword id="KW-0234">DNA repair</keyword>
<keyword id="KW-0479">Metal-binding</keyword>
<keyword id="KW-1185">Reference proteome</keyword>
<keyword id="KW-0862">Zinc</keyword>
<keyword id="KW-0863">Zinc-finger</keyword>
<comment type="function">
    <text evidence="1">May play a role in DNA repair. It seems to be involved in an RecBC-independent recombinational process of DNA repair. It may act with RecF and RecO.</text>
</comment>
<comment type="similarity">
    <text evidence="1">Belongs to the RecR family.</text>
</comment>
<protein>
    <recommendedName>
        <fullName evidence="1">Recombination protein RecR</fullName>
    </recommendedName>
</protein>
<evidence type="ECO:0000255" key="1">
    <source>
        <dbReference type="HAMAP-Rule" id="MF_00017"/>
    </source>
</evidence>
<accession>Q3J7Z8</accession>
<reference key="1">
    <citation type="journal article" date="2006" name="Appl. Environ. Microbiol.">
        <title>Complete genome sequence of the marine, chemolithoautotrophic, ammonia-oxidizing bacterium Nitrosococcus oceani ATCC 19707.</title>
        <authorList>
            <person name="Klotz M.G."/>
            <person name="Arp D.J."/>
            <person name="Chain P.S.G."/>
            <person name="El-Sheikh A.F."/>
            <person name="Hauser L.J."/>
            <person name="Hommes N.G."/>
            <person name="Larimer F.W."/>
            <person name="Malfatti S.A."/>
            <person name="Norton J.M."/>
            <person name="Poret-Peterson A.T."/>
            <person name="Vergez L.M."/>
            <person name="Ward B.B."/>
        </authorList>
    </citation>
    <scope>NUCLEOTIDE SEQUENCE [LARGE SCALE GENOMIC DNA]</scope>
    <source>
        <strain>ATCC 19707 / BCRC 17464 / JCM 30415 / NCIMB 11848 / C-107</strain>
    </source>
</reference>
<sequence length="199" mass="21798">MSLFGLSLGRLLEALRCLPGVGPKSAQRMAFHLLESDREGGRHLAQALLEALDKMTHCQTCRILSETDLCSLCADSRRDRGQLCVVEMPSDVQAIEQATSYSGRYFVLMGHLSPLDGVGPEALGMDLLAKRLDTDQIREVILATNLTVEGEATAYYISELAQTRGITTTRIAHGVPLGGELEFIDSNTLSHAFQSRRHL</sequence>